<organism>
    <name type="scientific">Tulipa gesneriana</name>
    <name type="common">Garden tulip</name>
    <dbReference type="NCBI Taxonomy" id="13306"/>
    <lineage>
        <taxon>Eukaryota</taxon>
        <taxon>Viridiplantae</taxon>
        <taxon>Streptophyta</taxon>
        <taxon>Embryophyta</taxon>
        <taxon>Tracheophyta</taxon>
        <taxon>Spermatophyta</taxon>
        <taxon>Magnoliopsida</taxon>
        <taxon>Liliopsida</taxon>
        <taxon>Liliales</taxon>
        <taxon>Liliaceae</taxon>
        <taxon>Tulipa</taxon>
    </lineage>
</organism>
<accession>I4DST9</accession>
<accession>I4DSU0</accession>
<accession>I4DSU1</accession>
<accession>I4DSU3</accession>
<feature type="transit peptide" description="Chloroplast" evidence="2">
    <location>
        <begin position="1"/>
        <end position="74"/>
    </location>
</feature>
<feature type="chain" id="PRO_0000423866" description="Tuliposide A-converting enzyme 2, chloroplastic">
    <location>
        <begin position="75"/>
        <end position="382"/>
    </location>
</feature>
<feature type="active site" description="Acyl-ester intermediate" evidence="1">
    <location>
        <position position="232"/>
    </location>
</feature>
<feature type="active site" description="Charge relay system" evidence="1">
    <location>
        <position position="324"/>
    </location>
</feature>
<feature type="active site" description="Charge relay system" evidence="1">
    <location>
        <position position="356"/>
    </location>
</feature>
<feature type="sequence conflict" description="In Ref. 1; BAM20980." evidence="3" ref="1">
    <original>S</original>
    <variation>P</variation>
    <location>
        <position position="28"/>
    </location>
</feature>
<feature type="sequence conflict" description="In Ref. 1; BAM20983." evidence="3" ref="1">
    <location>
        <begin position="104"/>
        <end position="116"/>
    </location>
</feature>
<feature type="sequence conflict" description="In Ref. 1; BAM20981." evidence="3" ref="1">
    <original>I</original>
    <variation>S</variation>
    <location>
        <position position="307"/>
    </location>
</feature>
<evidence type="ECO:0000250" key="1"/>
<evidence type="ECO:0000269" key="2">
    <source>
    </source>
</evidence>
<evidence type="ECO:0000305" key="3"/>
<evidence type="ECO:0000305" key="4">
    <source>
    </source>
</evidence>
<keyword id="KW-0150">Chloroplast</keyword>
<keyword id="KW-0903">Direct protein sequencing</keyword>
<keyword id="KW-0456">Lyase</keyword>
<keyword id="KW-0611">Plant defense</keyword>
<keyword id="KW-0934">Plastid</keyword>
<keyword id="KW-0809">Transit peptide</keyword>
<comment type="function">
    <text evidence="2">Lactone-forming carboxylesterases, specifically catalyzing intramolecular transesterification, but not hydrolysis. Involved in the biosynthesis of tulipalins, defensive chemicals that show antimicrobial activities against a broad range of strains of bacteria and fungi. Substrates are 6-tuliposide A &gt; 6-tuliposide B.</text>
</comment>
<comment type="catalytic activity">
    <reaction evidence="2">
        <text>6-tuliposide A = tulipalin A + D-glucose</text>
        <dbReference type="Rhea" id="RHEA:36071"/>
        <dbReference type="ChEBI" id="CHEBI:4167"/>
        <dbReference type="ChEBI" id="CHEBI:72781"/>
        <dbReference type="ChEBI" id="CHEBI:104120"/>
        <dbReference type="EC" id="4.2.99.22"/>
    </reaction>
</comment>
<comment type="activity regulation">
    <text evidence="2">Inhibited by NaF, AgNO(3), HgCl(2), CuSO(4) and phenylmethylsulfonyl fluoride (PMSF).</text>
</comment>
<comment type="biophysicochemical properties">
    <kinetics>
        <KM evidence="2">14 mM for 6-tuliposide A</KM>
        <KM evidence="2">72 mM for 6-tuliposide B</KM>
        <text>kcat is 2400 sec(-1) with 6-tuliposide A as substrate. kcat is 480 sec(-1) with 6-tuliposide B as substrate.</text>
    </kinetics>
    <phDependence>
        <text evidence="2">Optimum pH is 6.5-7.5.</text>
    </phDependence>
    <temperatureDependence>
        <text evidence="2">Optimum temperature is 35-45 degrees Celsius.</text>
    </temperatureDependence>
</comment>
<comment type="subunit">
    <text evidence="2">Homodimer.</text>
</comment>
<comment type="subcellular location">
    <subcellularLocation>
        <location evidence="1">Plastid</location>
        <location evidence="1">Chloroplast</location>
    </subcellularLocation>
</comment>
<comment type="tissue specificity">
    <text evidence="2">Expressed in roots, stems, leaves, petals, stamens and pistils, but not in bulb scales.</text>
</comment>
<comment type="miscellaneous">
    <text evidence="4">6-tuliposide A and tuliposide A-converting enzyme, which are compartmentalized in the vacuoles and plastids respectively, come into contact with each other for the enzyme reaction releasing toxic tulipalin A upon cell disruption by pathogen infection or herbivore predation.</text>
</comment>
<comment type="similarity">
    <text evidence="3">Belongs to the AB hydrolase superfamily.</text>
</comment>
<reference key="1">
    <citation type="journal article" date="2012" name="Plant Physiol.">
        <title>A novel lactone-forming carboxylesterase: molecular identification of a tuliposide a-converting enzyme in tulip.</title>
        <authorList>
            <person name="Nomura T."/>
            <person name="Ogita S."/>
            <person name="Kato Y."/>
        </authorList>
    </citation>
    <scope>NUCLEOTIDE SEQUENCE [MRNA]</scope>
    <scope>PROTEIN SEQUENCE OF 75-84; 93-104 AND 315-325</scope>
    <scope>FUNCTION</scope>
    <scope>CATALYTIC ACTIVITY</scope>
    <scope>BIOPHYSICOCHEMICAL PROPERTIES</scope>
    <scope>ACTIVITY REGULATION</scope>
    <scope>TISSUE SPECIFICITY</scope>
    <scope>SUBUNIT</scope>
    <source>
        <tissue>Petal</tissue>
    </source>
</reference>
<protein>
    <recommendedName>
        <fullName>Tuliposide A-converting enzyme 2, chloroplastic</fullName>
        <shortName>TgTCEA2</shortName>
        <ecNumber>4.2.99.22</ecNumber>
    </recommendedName>
</protein>
<dbReference type="EC" id="4.2.99.22"/>
<dbReference type="EMBL" id="AB569209">
    <property type="protein sequence ID" value="BAM20979.1"/>
    <property type="molecule type" value="mRNA"/>
</dbReference>
<dbReference type="EMBL" id="AB569210">
    <property type="protein sequence ID" value="BAM20980.1"/>
    <property type="molecule type" value="mRNA"/>
</dbReference>
<dbReference type="EMBL" id="AB569211">
    <property type="protein sequence ID" value="BAM20981.1"/>
    <property type="molecule type" value="mRNA"/>
</dbReference>
<dbReference type="EMBL" id="AB569213">
    <property type="protein sequence ID" value="BAM20983.1"/>
    <property type="molecule type" value="mRNA"/>
</dbReference>
<dbReference type="SMR" id="I4DST9"/>
<dbReference type="ESTHER" id="tulge-tcea2">
    <property type="family name" value="Plant_carboxylesterase"/>
</dbReference>
<dbReference type="KEGG" id="ag:BAM20979"/>
<dbReference type="GO" id="GO:0009507">
    <property type="term" value="C:chloroplast"/>
    <property type="evidence" value="ECO:0007669"/>
    <property type="project" value="UniProtKB-SubCell"/>
</dbReference>
<dbReference type="GO" id="GO:0016787">
    <property type="term" value="F:hydrolase activity"/>
    <property type="evidence" value="ECO:0007669"/>
    <property type="project" value="InterPro"/>
</dbReference>
<dbReference type="GO" id="GO:0016829">
    <property type="term" value="F:lyase activity"/>
    <property type="evidence" value="ECO:0007669"/>
    <property type="project" value="UniProtKB-KW"/>
</dbReference>
<dbReference type="GO" id="GO:0006952">
    <property type="term" value="P:defense response"/>
    <property type="evidence" value="ECO:0007669"/>
    <property type="project" value="UniProtKB-KW"/>
</dbReference>
<dbReference type="Gene3D" id="3.40.50.1820">
    <property type="entry name" value="alpha/beta hydrolase"/>
    <property type="match status" value="1"/>
</dbReference>
<dbReference type="InterPro" id="IPR013094">
    <property type="entry name" value="AB_hydrolase_3"/>
</dbReference>
<dbReference type="InterPro" id="IPR029058">
    <property type="entry name" value="AB_hydrolase_fold"/>
</dbReference>
<dbReference type="InterPro" id="IPR050466">
    <property type="entry name" value="Carboxylest/Gibb_receptor"/>
</dbReference>
<dbReference type="PANTHER" id="PTHR23024">
    <property type="entry name" value="ARYLACETAMIDE DEACETYLASE"/>
    <property type="match status" value="1"/>
</dbReference>
<dbReference type="PANTHER" id="PTHR23024:SF577">
    <property type="entry name" value="CARBOXYLESTERASE 2-RELATED"/>
    <property type="match status" value="1"/>
</dbReference>
<dbReference type="Pfam" id="PF07859">
    <property type="entry name" value="Abhydrolase_3"/>
    <property type="match status" value="1"/>
</dbReference>
<dbReference type="SUPFAM" id="SSF53474">
    <property type="entry name" value="alpha/beta-Hydrolases"/>
    <property type="match status" value="1"/>
</dbReference>
<sequence>MSVASFFSSLPARPFGYKDGRGRTGMVSTTDIGRRMVKPPVLACRPIESNTYHGSVFLTKSSRSPSPSLSPTPTALDDEIVLDLKPFLIIYKSGRIERFLGTTVIPACPEVATKDVVIDPATGVSVRLYLPNVVDLPSKKLPVLVYFHGGGFVIENTGSPNYHNYLTLLAAKAGVLIVSINYRLAPEYPLPASYDDCMAGFNWVVSHSAGPALEPWLAQHGDFSQILLSGDSAGGNVTHYVAMRADAGVIEGVAIVHPYFLGSEPVGNEINDPANIEFHDKLWRLAAPDTEGLDDPLINPVAPGAPILAGLKCKRAVVFVAGNDFLVERGRMYYEALVKSGWGGEAELVQHEGVGHVFHLSDYSGDISVAMMTKLIAFLKGE</sequence>
<gene>
    <name type="primary">TCEA2</name>
    <name type="synonym">TCEA3</name>
    <name type="synonym">TCEA4</name>
    <name type="synonym">TCEA6</name>
</gene>
<name>TCEA2_TULGE</name>
<proteinExistence type="evidence at protein level"/>